<keyword id="KW-1185">Reference proteome</keyword>
<dbReference type="EMBL" id="CR760237">
    <property type="protein sequence ID" value="CAJ82385.1"/>
    <property type="molecule type" value="mRNA"/>
</dbReference>
<dbReference type="EMBL" id="BC074519">
    <property type="protein sequence ID" value="AAH74519.1"/>
    <property type="molecule type" value="mRNA"/>
</dbReference>
<dbReference type="RefSeq" id="NP_001004784.1">
    <property type="nucleotide sequence ID" value="NM_001004784.1"/>
</dbReference>
<dbReference type="FunCoup" id="Q6DK93">
    <property type="interactions" value="10"/>
</dbReference>
<dbReference type="PaxDb" id="8364-ENSXETP00000026302"/>
<dbReference type="DNASU" id="448004"/>
<dbReference type="GeneID" id="448004"/>
<dbReference type="KEGG" id="xtr:448004"/>
<dbReference type="AGR" id="Xenbase:XB-GENE-5856332"/>
<dbReference type="CTD" id="84518"/>
<dbReference type="Xenbase" id="XB-GENE-5856332">
    <property type="gene designation" value="cnfn"/>
</dbReference>
<dbReference type="eggNOG" id="ENOG502S8N3">
    <property type="taxonomic scope" value="Eukaryota"/>
</dbReference>
<dbReference type="HOGENOM" id="CLU_083147_5_0_1"/>
<dbReference type="InParanoid" id="Q6DK93"/>
<dbReference type="OMA" id="CASTCYQ"/>
<dbReference type="OrthoDB" id="1045822at2759"/>
<dbReference type="PhylomeDB" id="Q6DK93"/>
<dbReference type="TreeFam" id="TF330308"/>
<dbReference type="Proteomes" id="UP000008143">
    <property type="component" value="Chromosome 7"/>
</dbReference>
<dbReference type="Bgee" id="ENSXETG00000026058">
    <property type="expression patterns" value="Expressed in neurula embryo and 19 other cell types or tissues"/>
</dbReference>
<dbReference type="InterPro" id="IPR006461">
    <property type="entry name" value="PLAC_motif_containing"/>
</dbReference>
<dbReference type="NCBIfam" id="TIGR01571">
    <property type="entry name" value="A_thal_Cys_rich"/>
    <property type="match status" value="1"/>
</dbReference>
<dbReference type="PANTHER" id="PTHR15907">
    <property type="entry name" value="DUF614 FAMILY PROTEIN-RELATED"/>
    <property type="match status" value="1"/>
</dbReference>
<dbReference type="Pfam" id="PF04749">
    <property type="entry name" value="PLAC8"/>
    <property type="match status" value="1"/>
</dbReference>
<feature type="chain" id="PRO_0000261200" description="Cornifelin homolog">
    <location>
        <begin position="1"/>
        <end position="111"/>
    </location>
</feature>
<gene>
    <name type="primary">cnfn</name>
    <name type="ORF">TNeu057a17.1</name>
</gene>
<name>CNFN_XENTR</name>
<comment type="similarity">
    <text evidence="1">Belongs to the cornifelin family.</text>
</comment>
<protein>
    <recommendedName>
        <fullName>Cornifelin homolog</fullName>
    </recommendedName>
</protein>
<evidence type="ECO:0000305" key="1"/>
<proteinExistence type="inferred from homology"/>
<reference key="1">
    <citation type="submission" date="2006-06" db="EMBL/GenBank/DDBJ databases">
        <authorList>
            <consortium name="Sanger Xenopus tropicalis EST/cDNA project"/>
        </authorList>
    </citation>
    <scope>NUCLEOTIDE SEQUENCE [LARGE SCALE MRNA]</scope>
    <source>
        <tissue>Neurula</tissue>
    </source>
</reference>
<reference key="2">
    <citation type="submission" date="2004-06" db="EMBL/GenBank/DDBJ databases">
        <authorList>
            <consortium name="NIH - Xenopus Gene Collection (XGC) project"/>
        </authorList>
    </citation>
    <scope>NUCLEOTIDE SEQUENCE [LARGE SCALE MRNA]</scope>
    <source>
        <tissue>Embryo</tissue>
    </source>
</reference>
<accession>Q6DK93</accession>
<organism>
    <name type="scientific">Xenopus tropicalis</name>
    <name type="common">Western clawed frog</name>
    <name type="synonym">Silurana tropicalis</name>
    <dbReference type="NCBI Taxonomy" id="8364"/>
    <lineage>
        <taxon>Eukaryota</taxon>
        <taxon>Metazoa</taxon>
        <taxon>Chordata</taxon>
        <taxon>Craniata</taxon>
        <taxon>Vertebrata</taxon>
        <taxon>Euteleostomi</taxon>
        <taxon>Amphibia</taxon>
        <taxon>Batrachia</taxon>
        <taxon>Anura</taxon>
        <taxon>Pipoidea</taxon>
        <taxon>Pipidae</taxon>
        <taxon>Xenopodinae</taxon>
        <taxon>Xenopus</taxon>
        <taxon>Silurana</taxon>
    </lineage>
</organism>
<sequence>MSYPIGAQPQGVQGYVTSNSSQWNSDVFDCCEDMGICLCGTFVPCILACKVSQDFGECCCLPCLFGSVLAVRTGIRERYHIEGSICNDWVCLSFCGQCTLCQMARELKARN</sequence>